<protein>
    <recommendedName>
        <fullName evidence="1">ATP synthase epsilon chain</fullName>
    </recommendedName>
    <alternativeName>
        <fullName evidence="1">ATP synthase F1 sector epsilon subunit</fullName>
    </alternativeName>
    <alternativeName>
        <fullName evidence="1">F-ATPase epsilon subunit</fullName>
    </alternativeName>
</protein>
<feature type="chain" id="PRO_0000188194" description="ATP synthase epsilon chain">
    <location>
        <begin position="1"/>
        <end position="110"/>
    </location>
</feature>
<sequence>MNETIQVKIITPSSIAFEKQSKMVTMPGEDGMFGVLPNHVPMIVNLTAGLVQVYINNMHNSENTYLISGGVTEITSNYINIVTEAAINVTNLSESEISTQCYELQKLSSH</sequence>
<dbReference type="EMBL" id="AE017197">
    <property type="protein sequence ID" value="AAU04243.1"/>
    <property type="status" value="ALT_INIT"/>
    <property type="molecule type" value="Genomic_DNA"/>
</dbReference>
<dbReference type="RefSeq" id="WP_011191218.1">
    <property type="nucleotide sequence ID" value="NC_006142.1"/>
</dbReference>
<dbReference type="SMR" id="Q68VU9"/>
<dbReference type="KEGG" id="rty:RT0787"/>
<dbReference type="eggNOG" id="COG0355">
    <property type="taxonomic scope" value="Bacteria"/>
</dbReference>
<dbReference type="HOGENOM" id="CLU_084338_2_1_5"/>
<dbReference type="OrthoDB" id="9799969at2"/>
<dbReference type="Proteomes" id="UP000000604">
    <property type="component" value="Chromosome"/>
</dbReference>
<dbReference type="GO" id="GO:0005886">
    <property type="term" value="C:plasma membrane"/>
    <property type="evidence" value="ECO:0007669"/>
    <property type="project" value="UniProtKB-SubCell"/>
</dbReference>
<dbReference type="GO" id="GO:0045259">
    <property type="term" value="C:proton-transporting ATP synthase complex"/>
    <property type="evidence" value="ECO:0007669"/>
    <property type="project" value="UniProtKB-KW"/>
</dbReference>
<dbReference type="GO" id="GO:0005524">
    <property type="term" value="F:ATP binding"/>
    <property type="evidence" value="ECO:0007669"/>
    <property type="project" value="UniProtKB-UniRule"/>
</dbReference>
<dbReference type="GO" id="GO:0046933">
    <property type="term" value="F:proton-transporting ATP synthase activity, rotational mechanism"/>
    <property type="evidence" value="ECO:0007669"/>
    <property type="project" value="UniProtKB-UniRule"/>
</dbReference>
<dbReference type="CDD" id="cd12152">
    <property type="entry name" value="F1-ATPase_delta"/>
    <property type="match status" value="1"/>
</dbReference>
<dbReference type="Gene3D" id="2.60.15.10">
    <property type="entry name" value="F0F1 ATP synthase delta/epsilon subunit, N-terminal"/>
    <property type="match status" value="1"/>
</dbReference>
<dbReference type="HAMAP" id="MF_00530">
    <property type="entry name" value="ATP_synth_epsil_bac"/>
    <property type="match status" value="1"/>
</dbReference>
<dbReference type="InterPro" id="IPR001469">
    <property type="entry name" value="ATP_synth_F1_dsu/esu"/>
</dbReference>
<dbReference type="InterPro" id="IPR020546">
    <property type="entry name" value="ATP_synth_F1_dsu/esu_N"/>
</dbReference>
<dbReference type="InterPro" id="IPR036771">
    <property type="entry name" value="ATPsynth_dsu/esu_N"/>
</dbReference>
<dbReference type="NCBIfam" id="TIGR01216">
    <property type="entry name" value="ATP_synt_epsi"/>
    <property type="match status" value="1"/>
</dbReference>
<dbReference type="NCBIfam" id="NF002403">
    <property type="entry name" value="PRK01474.1"/>
    <property type="match status" value="1"/>
</dbReference>
<dbReference type="PANTHER" id="PTHR13822">
    <property type="entry name" value="ATP SYNTHASE DELTA/EPSILON CHAIN"/>
    <property type="match status" value="1"/>
</dbReference>
<dbReference type="PANTHER" id="PTHR13822:SF10">
    <property type="entry name" value="ATP SYNTHASE EPSILON CHAIN, CHLOROPLASTIC"/>
    <property type="match status" value="1"/>
</dbReference>
<dbReference type="Pfam" id="PF02823">
    <property type="entry name" value="ATP-synt_DE_N"/>
    <property type="match status" value="1"/>
</dbReference>
<dbReference type="SUPFAM" id="SSF51344">
    <property type="entry name" value="Epsilon subunit of F1F0-ATP synthase N-terminal domain"/>
    <property type="match status" value="1"/>
</dbReference>
<comment type="function">
    <text evidence="1">Produces ATP from ADP in the presence of a proton gradient across the membrane.</text>
</comment>
<comment type="subunit">
    <text>F-type ATPases have 2 components, CF(1) - the catalytic core - and CF(0) - the membrane proton channel. CF(1) has five subunits: alpha(3), beta(3), gamma(1), delta(1), epsilon(1). CF(0) has three main subunits: a, b and c.</text>
</comment>
<comment type="subcellular location">
    <subcellularLocation>
        <location evidence="1">Cell inner membrane</location>
        <topology evidence="1">Peripheral membrane protein</topology>
    </subcellularLocation>
</comment>
<comment type="similarity">
    <text evidence="1">Belongs to the ATPase epsilon chain family.</text>
</comment>
<comment type="sequence caution" evidence="2">
    <conflict type="erroneous initiation">
        <sequence resource="EMBL-CDS" id="AAU04243"/>
    </conflict>
</comment>
<organism>
    <name type="scientific">Rickettsia typhi (strain ATCC VR-144 / Wilmington)</name>
    <dbReference type="NCBI Taxonomy" id="257363"/>
    <lineage>
        <taxon>Bacteria</taxon>
        <taxon>Pseudomonadati</taxon>
        <taxon>Pseudomonadota</taxon>
        <taxon>Alphaproteobacteria</taxon>
        <taxon>Rickettsiales</taxon>
        <taxon>Rickettsiaceae</taxon>
        <taxon>Rickettsieae</taxon>
        <taxon>Rickettsia</taxon>
        <taxon>typhus group</taxon>
    </lineage>
</organism>
<reference key="1">
    <citation type="journal article" date="2004" name="J. Bacteriol.">
        <title>Complete genome sequence of Rickettsia typhi and comparison with sequences of other Rickettsiae.</title>
        <authorList>
            <person name="McLeod M.P."/>
            <person name="Qin X."/>
            <person name="Karpathy S.E."/>
            <person name="Gioia J."/>
            <person name="Highlander S.K."/>
            <person name="Fox G.E."/>
            <person name="McNeill T.Z."/>
            <person name="Jiang H."/>
            <person name="Muzny D."/>
            <person name="Jacob L.S."/>
            <person name="Hawes A.C."/>
            <person name="Sodergren E."/>
            <person name="Gill R."/>
            <person name="Hume J."/>
            <person name="Morgan M."/>
            <person name="Fan G."/>
            <person name="Amin A.G."/>
            <person name="Gibbs R.A."/>
            <person name="Hong C."/>
            <person name="Yu X.-J."/>
            <person name="Walker D.H."/>
            <person name="Weinstock G.M."/>
        </authorList>
    </citation>
    <scope>NUCLEOTIDE SEQUENCE [LARGE SCALE GENOMIC DNA]</scope>
    <source>
        <strain>ATCC VR-144 / Wilmington</strain>
    </source>
</reference>
<evidence type="ECO:0000255" key="1">
    <source>
        <dbReference type="HAMAP-Rule" id="MF_00530"/>
    </source>
</evidence>
<evidence type="ECO:0000305" key="2"/>
<proteinExistence type="inferred from homology"/>
<gene>
    <name evidence="1" type="primary">atpC</name>
    <name type="ordered locus">RT0787</name>
</gene>
<keyword id="KW-0066">ATP synthesis</keyword>
<keyword id="KW-0997">Cell inner membrane</keyword>
<keyword id="KW-1003">Cell membrane</keyword>
<keyword id="KW-0139">CF(1)</keyword>
<keyword id="KW-0375">Hydrogen ion transport</keyword>
<keyword id="KW-0406">Ion transport</keyword>
<keyword id="KW-0472">Membrane</keyword>
<keyword id="KW-0813">Transport</keyword>
<name>ATPE_RICTY</name>
<accession>Q68VU9</accession>